<name>KDGD_LEPCP</name>
<sequence>MSPQELKNVLQSGLLSFPLTDFDRELNFAPKPYAERLKWLQPYGASALFAAGGTGEFFSLEPGEYSDVIKVALDTCRGRTPIIAGAGGGTRVAIQYAQEAERLGAQGVLLLPHYLTEASQEGLIAHVQAVCRSVRFGVTVYNRGACKLTPASLLVLAETCPNLIGFKDGIGDIETFVSIRQTLGERFAYLGGLPTAEVFAGAYKAMGCPVYSSAVFNFIPKTAMEFYNAHAAGDSATCDRLIRDFFLPYIALRNKNHGYAVSIVKAGATLIGHGAGPVRPPLSDLKPAEVAELAALMAKLGPQ</sequence>
<evidence type="ECO:0000255" key="1">
    <source>
        <dbReference type="HAMAP-Rule" id="MF_00694"/>
    </source>
</evidence>
<keyword id="KW-0456">Lyase</keyword>
<keyword id="KW-1185">Reference proteome</keyword>
<organism>
    <name type="scientific">Leptothrix cholodnii (strain ATCC 51168 / LMG 8142 / SP-6)</name>
    <name type="common">Leptothrix discophora (strain SP-6)</name>
    <dbReference type="NCBI Taxonomy" id="395495"/>
    <lineage>
        <taxon>Bacteria</taxon>
        <taxon>Pseudomonadati</taxon>
        <taxon>Pseudomonadota</taxon>
        <taxon>Betaproteobacteria</taxon>
        <taxon>Burkholderiales</taxon>
        <taxon>Sphaerotilaceae</taxon>
        <taxon>Leptothrix</taxon>
    </lineage>
</organism>
<proteinExistence type="inferred from homology"/>
<protein>
    <recommendedName>
        <fullName evidence="1">Probable 5-dehydro-4-deoxyglucarate dehydratase</fullName>
        <ecNumber evidence="1">4.2.1.41</ecNumber>
    </recommendedName>
    <alternativeName>
        <fullName evidence="1">5-keto-4-deoxy-glucarate dehydratase</fullName>
        <shortName evidence="1">KDGDH</shortName>
    </alternativeName>
</protein>
<feature type="chain" id="PRO_1000132270" description="Probable 5-dehydro-4-deoxyglucarate dehydratase">
    <location>
        <begin position="1"/>
        <end position="303"/>
    </location>
</feature>
<dbReference type="EC" id="4.2.1.41" evidence="1"/>
<dbReference type="EMBL" id="CP001013">
    <property type="protein sequence ID" value="ACB33386.1"/>
    <property type="molecule type" value="Genomic_DNA"/>
</dbReference>
<dbReference type="RefSeq" id="WP_012346148.1">
    <property type="nucleotide sequence ID" value="NC_010524.1"/>
</dbReference>
<dbReference type="SMR" id="B1Y3Z2"/>
<dbReference type="STRING" id="395495.Lcho_1117"/>
<dbReference type="KEGG" id="lch:Lcho_1117"/>
<dbReference type="eggNOG" id="COG0329">
    <property type="taxonomic scope" value="Bacteria"/>
</dbReference>
<dbReference type="HOGENOM" id="CLU_049343_5_2_4"/>
<dbReference type="OrthoDB" id="8995637at2"/>
<dbReference type="UniPathway" id="UPA00564">
    <property type="reaction ID" value="UER00628"/>
</dbReference>
<dbReference type="Proteomes" id="UP000001693">
    <property type="component" value="Chromosome"/>
</dbReference>
<dbReference type="GO" id="GO:0008840">
    <property type="term" value="F:4-hydroxy-tetrahydrodipicolinate synthase activity"/>
    <property type="evidence" value="ECO:0007669"/>
    <property type="project" value="TreeGrafter"/>
</dbReference>
<dbReference type="GO" id="GO:0047448">
    <property type="term" value="F:5-dehydro-4-deoxyglucarate dehydratase activity"/>
    <property type="evidence" value="ECO:0007669"/>
    <property type="project" value="UniProtKB-UniRule"/>
</dbReference>
<dbReference type="GO" id="GO:0042838">
    <property type="term" value="P:D-glucarate catabolic process"/>
    <property type="evidence" value="ECO:0007669"/>
    <property type="project" value="UniProtKB-UniRule"/>
</dbReference>
<dbReference type="CDD" id="cd00951">
    <property type="entry name" value="KDGDH"/>
    <property type="match status" value="1"/>
</dbReference>
<dbReference type="Gene3D" id="3.20.20.70">
    <property type="entry name" value="Aldolase class I"/>
    <property type="match status" value="1"/>
</dbReference>
<dbReference type="HAMAP" id="MF_00694">
    <property type="entry name" value="KDGDH"/>
    <property type="match status" value="1"/>
</dbReference>
<dbReference type="InterPro" id="IPR013785">
    <property type="entry name" value="Aldolase_TIM"/>
</dbReference>
<dbReference type="InterPro" id="IPR002220">
    <property type="entry name" value="DapA-like"/>
</dbReference>
<dbReference type="InterPro" id="IPR017655">
    <property type="entry name" value="Dehydro-deoxyglucarate_dehyd"/>
</dbReference>
<dbReference type="NCBIfam" id="TIGR03249">
    <property type="entry name" value="KdgD"/>
    <property type="match status" value="1"/>
</dbReference>
<dbReference type="NCBIfam" id="NF002958">
    <property type="entry name" value="PRK03620.1"/>
    <property type="match status" value="1"/>
</dbReference>
<dbReference type="PANTHER" id="PTHR12128:SF19">
    <property type="entry name" value="5-DEHYDRO-4-DEOXYGLUCARATE DEHYDRATASE 2-RELATED"/>
    <property type="match status" value="1"/>
</dbReference>
<dbReference type="PANTHER" id="PTHR12128">
    <property type="entry name" value="DIHYDRODIPICOLINATE SYNTHASE"/>
    <property type="match status" value="1"/>
</dbReference>
<dbReference type="Pfam" id="PF00701">
    <property type="entry name" value="DHDPS"/>
    <property type="match status" value="1"/>
</dbReference>
<dbReference type="PIRSF" id="PIRSF001365">
    <property type="entry name" value="DHDPS"/>
    <property type="match status" value="1"/>
</dbReference>
<dbReference type="SMART" id="SM01130">
    <property type="entry name" value="DHDPS"/>
    <property type="match status" value="1"/>
</dbReference>
<dbReference type="SUPFAM" id="SSF51569">
    <property type="entry name" value="Aldolase"/>
    <property type="match status" value="1"/>
</dbReference>
<reference key="1">
    <citation type="submission" date="2008-03" db="EMBL/GenBank/DDBJ databases">
        <title>Complete sequence of Leptothrix cholodnii SP-6.</title>
        <authorList>
            <consortium name="US DOE Joint Genome Institute"/>
            <person name="Copeland A."/>
            <person name="Lucas S."/>
            <person name="Lapidus A."/>
            <person name="Glavina del Rio T."/>
            <person name="Dalin E."/>
            <person name="Tice H."/>
            <person name="Bruce D."/>
            <person name="Goodwin L."/>
            <person name="Pitluck S."/>
            <person name="Chertkov O."/>
            <person name="Brettin T."/>
            <person name="Detter J.C."/>
            <person name="Han C."/>
            <person name="Kuske C.R."/>
            <person name="Schmutz J."/>
            <person name="Larimer F."/>
            <person name="Land M."/>
            <person name="Hauser L."/>
            <person name="Kyrpides N."/>
            <person name="Lykidis A."/>
            <person name="Emerson D."/>
            <person name="Richardson P."/>
        </authorList>
    </citation>
    <scope>NUCLEOTIDE SEQUENCE [LARGE SCALE GENOMIC DNA]</scope>
    <source>
        <strain>ATCC 51168 / LMG 8142 / SP-6</strain>
    </source>
</reference>
<accession>B1Y3Z2</accession>
<gene>
    <name type="ordered locus">Lcho_1117</name>
</gene>
<comment type="catalytic activity">
    <reaction evidence="1">
        <text>5-dehydro-4-deoxy-D-glucarate + H(+) = 2,5-dioxopentanoate + CO2 + H2O</text>
        <dbReference type="Rhea" id="RHEA:24608"/>
        <dbReference type="ChEBI" id="CHEBI:15377"/>
        <dbReference type="ChEBI" id="CHEBI:15378"/>
        <dbReference type="ChEBI" id="CHEBI:16526"/>
        <dbReference type="ChEBI" id="CHEBI:42819"/>
        <dbReference type="ChEBI" id="CHEBI:58136"/>
        <dbReference type="EC" id="4.2.1.41"/>
    </reaction>
</comment>
<comment type="pathway">
    <text evidence="1">Carbohydrate acid metabolism; D-glucarate degradation; 2,5-dioxopentanoate from D-glucarate: step 2/2.</text>
</comment>
<comment type="similarity">
    <text evidence="1">Belongs to the DapA family.</text>
</comment>